<feature type="chain" id="PRO_0000162739" description="Uncharacterized RNA pseudouridine synthase MG209">
    <location>
        <begin position="1"/>
        <end position="308"/>
    </location>
</feature>
<feature type="domain" description="S4 RNA-binding" evidence="2">
    <location>
        <begin position="11"/>
        <end position="87"/>
    </location>
</feature>
<feature type="active site" evidence="1">
    <location>
        <position position="131"/>
    </location>
</feature>
<dbReference type="EC" id="5.4.99.-"/>
<dbReference type="EMBL" id="L43967">
    <property type="protein sequence ID" value="AAC71427.1"/>
    <property type="molecule type" value="Genomic_DNA"/>
</dbReference>
<dbReference type="EMBL" id="U02214">
    <property type="protein sequence ID" value="AAD12509.1"/>
    <property type="molecule type" value="Genomic_DNA"/>
</dbReference>
<dbReference type="PIR" id="A64223">
    <property type="entry name" value="A64223"/>
</dbReference>
<dbReference type="RefSeq" id="WP_009885746.1">
    <property type="nucleotide sequence ID" value="NC_000908.2"/>
</dbReference>
<dbReference type="SMR" id="P47451"/>
<dbReference type="FunCoup" id="P47451">
    <property type="interactions" value="217"/>
</dbReference>
<dbReference type="STRING" id="243273.MG_209"/>
<dbReference type="GeneID" id="88282341"/>
<dbReference type="KEGG" id="mge:MG_209"/>
<dbReference type="eggNOG" id="COG0564">
    <property type="taxonomic scope" value="Bacteria"/>
</dbReference>
<dbReference type="HOGENOM" id="CLU_016902_4_4_14"/>
<dbReference type="InParanoid" id="P47451"/>
<dbReference type="OrthoDB" id="9807829at2"/>
<dbReference type="BioCyc" id="MGEN243273:G1GJ2-242-MONOMER"/>
<dbReference type="Proteomes" id="UP000000807">
    <property type="component" value="Chromosome"/>
</dbReference>
<dbReference type="GO" id="GO:0009982">
    <property type="term" value="F:pseudouridine synthase activity"/>
    <property type="evidence" value="ECO:0000318"/>
    <property type="project" value="GO_Central"/>
</dbReference>
<dbReference type="GO" id="GO:0003723">
    <property type="term" value="F:RNA binding"/>
    <property type="evidence" value="ECO:0007669"/>
    <property type="project" value="UniProtKB-KW"/>
</dbReference>
<dbReference type="GO" id="GO:0120159">
    <property type="term" value="F:rRNA pseudouridine synthase activity"/>
    <property type="evidence" value="ECO:0007669"/>
    <property type="project" value="UniProtKB-ARBA"/>
</dbReference>
<dbReference type="GO" id="GO:0000455">
    <property type="term" value="P:enzyme-directed rRNA pseudouridine synthesis"/>
    <property type="evidence" value="ECO:0000318"/>
    <property type="project" value="GO_Central"/>
</dbReference>
<dbReference type="CDD" id="cd02869">
    <property type="entry name" value="PseudoU_synth_RluA_like"/>
    <property type="match status" value="1"/>
</dbReference>
<dbReference type="CDD" id="cd00165">
    <property type="entry name" value="S4"/>
    <property type="match status" value="1"/>
</dbReference>
<dbReference type="Gene3D" id="3.30.2350.10">
    <property type="entry name" value="Pseudouridine synthase"/>
    <property type="match status" value="1"/>
</dbReference>
<dbReference type="Gene3D" id="3.10.290.10">
    <property type="entry name" value="RNA-binding S4 domain"/>
    <property type="match status" value="1"/>
</dbReference>
<dbReference type="InterPro" id="IPR020103">
    <property type="entry name" value="PsdUridine_synth_cat_dom_sf"/>
</dbReference>
<dbReference type="InterPro" id="IPR006224">
    <property type="entry name" value="PsdUridine_synth_RluA-like_CS"/>
</dbReference>
<dbReference type="InterPro" id="IPR006225">
    <property type="entry name" value="PsdUridine_synth_RluC/D"/>
</dbReference>
<dbReference type="InterPro" id="IPR006145">
    <property type="entry name" value="PsdUridine_synth_RsuA/RluA"/>
</dbReference>
<dbReference type="InterPro" id="IPR050188">
    <property type="entry name" value="RluA_PseudoU_synthase"/>
</dbReference>
<dbReference type="InterPro" id="IPR002942">
    <property type="entry name" value="S4_RNA-bd"/>
</dbReference>
<dbReference type="InterPro" id="IPR036986">
    <property type="entry name" value="S4_RNA-bd_sf"/>
</dbReference>
<dbReference type="NCBIfam" id="TIGR00005">
    <property type="entry name" value="rluA_subfam"/>
    <property type="match status" value="1"/>
</dbReference>
<dbReference type="PANTHER" id="PTHR21600">
    <property type="entry name" value="MITOCHONDRIAL RNA PSEUDOURIDINE SYNTHASE"/>
    <property type="match status" value="1"/>
</dbReference>
<dbReference type="PANTHER" id="PTHR21600:SF44">
    <property type="entry name" value="RIBOSOMAL LARGE SUBUNIT PSEUDOURIDINE SYNTHASE D"/>
    <property type="match status" value="1"/>
</dbReference>
<dbReference type="Pfam" id="PF00849">
    <property type="entry name" value="PseudoU_synth_2"/>
    <property type="match status" value="1"/>
</dbReference>
<dbReference type="Pfam" id="PF01479">
    <property type="entry name" value="S4"/>
    <property type="match status" value="1"/>
</dbReference>
<dbReference type="SMART" id="SM00363">
    <property type="entry name" value="S4"/>
    <property type="match status" value="1"/>
</dbReference>
<dbReference type="SUPFAM" id="SSF55174">
    <property type="entry name" value="Alpha-L RNA-binding motif"/>
    <property type="match status" value="1"/>
</dbReference>
<dbReference type="SUPFAM" id="SSF55120">
    <property type="entry name" value="Pseudouridine synthase"/>
    <property type="match status" value="1"/>
</dbReference>
<dbReference type="PROSITE" id="PS01129">
    <property type="entry name" value="PSI_RLU"/>
    <property type="match status" value="1"/>
</dbReference>
<dbReference type="PROSITE" id="PS50889">
    <property type="entry name" value="S4"/>
    <property type="match status" value="1"/>
</dbReference>
<comment type="catalytic activity">
    <reaction>
        <text>a uridine in RNA = a pseudouridine in RNA</text>
        <dbReference type="Rhea" id="RHEA:48348"/>
        <dbReference type="Rhea" id="RHEA-COMP:12068"/>
        <dbReference type="Rhea" id="RHEA-COMP:12069"/>
        <dbReference type="ChEBI" id="CHEBI:65314"/>
        <dbReference type="ChEBI" id="CHEBI:65315"/>
    </reaction>
</comment>
<comment type="similarity">
    <text evidence="3">Belongs to the pseudouridine synthase RluA family.</text>
</comment>
<proteinExistence type="inferred from homology"/>
<sequence length="308" mass="34996">MKQCFVVTTTKRLDSLLASLLNLSRVKVVKLIMNGQIKVNEKLTFKNSLIVAKDDVIKVEIHDETTSDFITSVEPYNLKLEVLFEDKDLMVINKPSGLLTHPTTFNEKASLLAACIFHNNKNPVYLVHRLDRDTSGAIVVCKNQASLLNLQNQLQNRTLKRYYVALVHFPFNALTGSINAPLARVNNNKVMFKIAQTAKAKQAITKFKVINQNEKAALISLELLTGRTHQIRVHLKFIQHPVYNDPLYGIKSEKKDSYGQFLHANRICFIHPTLNKPMDFHAPLEPKFSTKLKSLNLSLTDPLHVLFK</sequence>
<name>Y209_MYCGE</name>
<reference key="1">
    <citation type="journal article" date="1995" name="Science">
        <title>The minimal gene complement of Mycoplasma genitalium.</title>
        <authorList>
            <person name="Fraser C.M."/>
            <person name="Gocayne J.D."/>
            <person name="White O."/>
            <person name="Adams M.D."/>
            <person name="Clayton R.A."/>
            <person name="Fleischmann R.D."/>
            <person name="Bult C.J."/>
            <person name="Kerlavage A.R."/>
            <person name="Sutton G.G."/>
            <person name="Kelley J.M."/>
            <person name="Fritchman J.L."/>
            <person name="Weidman J.F."/>
            <person name="Small K.V."/>
            <person name="Sandusky M."/>
            <person name="Fuhrmann J.L."/>
            <person name="Nguyen D.T."/>
            <person name="Utterback T.R."/>
            <person name="Saudek D.M."/>
            <person name="Phillips C.A."/>
            <person name="Merrick J.M."/>
            <person name="Tomb J.-F."/>
            <person name="Dougherty B.A."/>
            <person name="Bott K.F."/>
            <person name="Hu P.-C."/>
            <person name="Lucier T.S."/>
            <person name="Peterson S.N."/>
            <person name="Smith H.O."/>
            <person name="Hutchison C.A. III"/>
            <person name="Venter J.C."/>
        </authorList>
    </citation>
    <scope>NUCLEOTIDE SEQUENCE [LARGE SCALE GENOMIC DNA]</scope>
    <source>
        <strain>ATCC 33530 / DSM 19775 / NCTC 10195 / G37</strain>
    </source>
</reference>
<reference key="2">
    <citation type="journal article" date="1993" name="J. Bacteriol.">
        <title>A survey of the Mycoplasma genitalium genome by using random sequencing.</title>
        <authorList>
            <person name="Peterson S.N."/>
            <person name="Hu P.-C."/>
            <person name="Bott K.F."/>
            <person name="Hutchison C.A. III"/>
        </authorList>
    </citation>
    <scope>NUCLEOTIDE SEQUENCE [GENOMIC DNA] OF 125-243</scope>
    <source>
        <strain>ATCC 33530 / DSM 19775 / NCTC 10195 / G37</strain>
    </source>
</reference>
<keyword id="KW-0413">Isomerase</keyword>
<keyword id="KW-1185">Reference proteome</keyword>
<keyword id="KW-0694">RNA-binding</keyword>
<organism>
    <name type="scientific">Mycoplasma genitalium (strain ATCC 33530 / DSM 19775 / NCTC 10195 / G37)</name>
    <name type="common">Mycoplasmoides genitalium</name>
    <dbReference type="NCBI Taxonomy" id="243273"/>
    <lineage>
        <taxon>Bacteria</taxon>
        <taxon>Bacillati</taxon>
        <taxon>Mycoplasmatota</taxon>
        <taxon>Mycoplasmoidales</taxon>
        <taxon>Mycoplasmoidaceae</taxon>
        <taxon>Mycoplasmoides</taxon>
    </lineage>
</organism>
<gene>
    <name type="ordered locus">MG209</name>
</gene>
<protein>
    <recommendedName>
        <fullName>Uncharacterized RNA pseudouridine synthase MG209</fullName>
        <ecNumber>5.4.99.-</ecNumber>
    </recommendedName>
    <alternativeName>
        <fullName>RNA pseudouridylate synthase</fullName>
    </alternativeName>
    <alternativeName>
        <fullName>RNA-uridine isomerase</fullName>
    </alternativeName>
</protein>
<evidence type="ECO:0000250" key="1"/>
<evidence type="ECO:0000255" key="2">
    <source>
        <dbReference type="PROSITE-ProRule" id="PRU00182"/>
    </source>
</evidence>
<evidence type="ECO:0000305" key="3"/>
<accession>P47451</accession>